<evidence type="ECO:0000255" key="1">
    <source>
        <dbReference type="HAMAP-Rule" id="MF_00364"/>
    </source>
</evidence>
<evidence type="ECO:0000305" key="2"/>
<sequence length="335" mass="35294">MLLIGVAGTTLSAQEVDWLQDDAVAGVVLFKRNFASRAQIVELSAALREAAPRPLLLAVDQEGGRVQRFHEGYSALPPLQGIGALYVRDPEAALELAFEHAWLMASEVRASGVDLSFAPVVDLGRGNRAIGDRAFSDDPHVVAAFAKAYVQGMHAAGMPVTLKHFPGHGSVLEDTHVDLAVDVRALETLESEDLVPFAAGIAAGADAVMMAHVVYPNVAPEPAGFSAHWIEVILRGRMGFRGVVFSDDIGMAAVRGVGGVVGCVHAHLDAGCDVVLVCHPELVNDALSAVAGRRSNTAALIGLIGRGVLGWDGLLADVRYGSIQSHLFERFGTST</sequence>
<protein>
    <recommendedName>
        <fullName evidence="1">Beta-hexosaminidase</fullName>
        <ecNumber evidence="1">3.2.1.52</ecNumber>
    </recommendedName>
    <alternativeName>
        <fullName evidence="1">Beta-N-acetylhexosaminidase</fullName>
    </alternativeName>
    <alternativeName>
        <fullName evidence="1">N-acetyl-beta-glucosaminidase</fullName>
    </alternativeName>
</protein>
<feature type="chain" id="PRO_0000210805" description="Beta-hexosaminidase">
    <location>
        <begin position="1"/>
        <end position="335"/>
    </location>
</feature>
<feature type="active site" description="Proton donor/acceptor" evidence="1">
    <location>
        <position position="176"/>
    </location>
</feature>
<feature type="active site" description="Nucleophile" evidence="1">
    <location>
        <position position="247"/>
    </location>
</feature>
<feature type="binding site" evidence="1">
    <location>
        <position position="60"/>
    </location>
    <ligand>
        <name>substrate</name>
    </ligand>
</feature>
<feature type="binding site" evidence="1">
    <location>
        <position position="68"/>
    </location>
    <ligand>
        <name>substrate</name>
    </ligand>
</feature>
<feature type="binding site" evidence="1">
    <location>
        <position position="133"/>
    </location>
    <ligand>
        <name>substrate</name>
    </ligand>
</feature>
<feature type="binding site" evidence="1">
    <location>
        <begin position="163"/>
        <end position="164"/>
    </location>
    <ligand>
        <name>substrate</name>
    </ligand>
</feature>
<feature type="site" description="Important for catalytic activity" evidence="1">
    <location>
        <position position="174"/>
    </location>
</feature>
<organism>
    <name type="scientific">Xylella fastidiosa (strain Temecula1 / ATCC 700964)</name>
    <dbReference type="NCBI Taxonomy" id="183190"/>
    <lineage>
        <taxon>Bacteria</taxon>
        <taxon>Pseudomonadati</taxon>
        <taxon>Pseudomonadota</taxon>
        <taxon>Gammaproteobacteria</taxon>
        <taxon>Lysobacterales</taxon>
        <taxon>Lysobacteraceae</taxon>
        <taxon>Xylella</taxon>
    </lineage>
</organism>
<keyword id="KW-0131">Cell cycle</keyword>
<keyword id="KW-0132">Cell division</keyword>
<keyword id="KW-0133">Cell shape</keyword>
<keyword id="KW-0961">Cell wall biogenesis/degradation</keyword>
<keyword id="KW-0963">Cytoplasm</keyword>
<keyword id="KW-0326">Glycosidase</keyword>
<keyword id="KW-0378">Hydrolase</keyword>
<keyword id="KW-0573">Peptidoglycan synthesis</keyword>
<keyword id="KW-1185">Reference proteome</keyword>
<proteinExistence type="inferred from homology"/>
<gene>
    <name evidence="1" type="primary">nagZ</name>
    <name type="ordered locus">PD_1383</name>
</gene>
<dbReference type="EC" id="3.2.1.52" evidence="1"/>
<dbReference type="EMBL" id="AE009442">
    <property type="protein sequence ID" value="AAO29230.1"/>
    <property type="status" value="ALT_INIT"/>
    <property type="molecule type" value="Genomic_DNA"/>
</dbReference>
<dbReference type="RefSeq" id="WP_004091030.1">
    <property type="nucleotide sequence ID" value="NC_004556.1"/>
</dbReference>
<dbReference type="SMR" id="Q87BR5"/>
<dbReference type="CAZy" id="GH3">
    <property type="family name" value="Glycoside Hydrolase Family 3"/>
</dbReference>
<dbReference type="GeneID" id="93905200"/>
<dbReference type="KEGG" id="xft:PD_1383"/>
<dbReference type="HOGENOM" id="CLU_008392_0_0_6"/>
<dbReference type="UniPathway" id="UPA00544"/>
<dbReference type="Proteomes" id="UP000002516">
    <property type="component" value="Chromosome"/>
</dbReference>
<dbReference type="GO" id="GO:0005737">
    <property type="term" value="C:cytoplasm"/>
    <property type="evidence" value="ECO:0007669"/>
    <property type="project" value="UniProtKB-SubCell"/>
</dbReference>
<dbReference type="GO" id="GO:0004563">
    <property type="term" value="F:beta-N-acetylhexosaminidase activity"/>
    <property type="evidence" value="ECO:0007669"/>
    <property type="project" value="UniProtKB-UniRule"/>
</dbReference>
<dbReference type="GO" id="GO:0005975">
    <property type="term" value="P:carbohydrate metabolic process"/>
    <property type="evidence" value="ECO:0007669"/>
    <property type="project" value="InterPro"/>
</dbReference>
<dbReference type="GO" id="GO:0051301">
    <property type="term" value="P:cell division"/>
    <property type="evidence" value="ECO:0007669"/>
    <property type="project" value="UniProtKB-KW"/>
</dbReference>
<dbReference type="GO" id="GO:0071555">
    <property type="term" value="P:cell wall organization"/>
    <property type="evidence" value="ECO:0007669"/>
    <property type="project" value="UniProtKB-KW"/>
</dbReference>
<dbReference type="GO" id="GO:0009252">
    <property type="term" value="P:peptidoglycan biosynthetic process"/>
    <property type="evidence" value="ECO:0007669"/>
    <property type="project" value="UniProtKB-KW"/>
</dbReference>
<dbReference type="GO" id="GO:0009254">
    <property type="term" value="P:peptidoglycan turnover"/>
    <property type="evidence" value="ECO:0007669"/>
    <property type="project" value="UniProtKB-UniRule"/>
</dbReference>
<dbReference type="GO" id="GO:0008360">
    <property type="term" value="P:regulation of cell shape"/>
    <property type="evidence" value="ECO:0007669"/>
    <property type="project" value="UniProtKB-KW"/>
</dbReference>
<dbReference type="Gene3D" id="3.20.20.300">
    <property type="entry name" value="Glycoside hydrolase, family 3, N-terminal domain"/>
    <property type="match status" value="1"/>
</dbReference>
<dbReference type="HAMAP" id="MF_00364">
    <property type="entry name" value="NagZ"/>
    <property type="match status" value="1"/>
</dbReference>
<dbReference type="InterPro" id="IPR022956">
    <property type="entry name" value="Beta_hexosaminidase_bac"/>
</dbReference>
<dbReference type="InterPro" id="IPR019800">
    <property type="entry name" value="Glyco_hydro_3_AS"/>
</dbReference>
<dbReference type="InterPro" id="IPR001764">
    <property type="entry name" value="Glyco_hydro_3_N"/>
</dbReference>
<dbReference type="InterPro" id="IPR036962">
    <property type="entry name" value="Glyco_hydro_3_N_sf"/>
</dbReference>
<dbReference type="InterPro" id="IPR017853">
    <property type="entry name" value="Glycoside_hydrolase_SF"/>
</dbReference>
<dbReference type="InterPro" id="IPR050226">
    <property type="entry name" value="NagZ_Beta-hexosaminidase"/>
</dbReference>
<dbReference type="NCBIfam" id="NF003740">
    <property type="entry name" value="PRK05337.1"/>
    <property type="match status" value="1"/>
</dbReference>
<dbReference type="PANTHER" id="PTHR30480:SF13">
    <property type="entry name" value="BETA-HEXOSAMINIDASE"/>
    <property type="match status" value="1"/>
</dbReference>
<dbReference type="PANTHER" id="PTHR30480">
    <property type="entry name" value="BETA-HEXOSAMINIDASE-RELATED"/>
    <property type="match status" value="1"/>
</dbReference>
<dbReference type="Pfam" id="PF00933">
    <property type="entry name" value="Glyco_hydro_3"/>
    <property type="match status" value="1"/>
</dbReference>
<dbReference type="SUPFAM" id="SSF51445">
    <property type="entry name" value="(Trans)glycosidases"/>
    <property type="match status" value="1"/>
</dbReference>
<dbReference type="PROSITE" id="PS00775">
    <property type="entry name" value="GLYCOSYL_HYDROL_F3"/>
    <property type="match status" value="1"/>
</dbReference>
<comment type="function">
    <text evidence="1">Plays a role in peptidoglycan recycling by cleaving the terminal beta-1,4-linked N-acetylglucosamine (GlcNAc) from peptide-linked peptidoglycan fragments, giving rise to free GlcNAc, anhydro-N-acetylmuramic acid and anhydro-N-acetylmuramic acid-linked peptides.</text>
</comment>
<comment type="catalytic activity">
    <reaction evidence="1">
        <text>Hydrolysis of terminal non-reducing N-acetyl-D-hexosamine residues in N-acetyl-beta-D-hexosaminides.</text>
        <dbReference type="EC" id="3.2.1.52"/>
    </reaction>
</comment>
<comment type="pathway">
    <text evidence="1">Cell wall biogenesis; peptidoglycan recycling.</text>
</comment>
<comment type="subcellular location">
    <subcellularLocation>
        <location evidence="1">Cytoplasm</location>
    </subcellularLocation>
</comment>
<comment type="similarity">
    <text evidence="1">Belongs to the glycosyl hydrolase 3 family. NagZ subfamily.</text>
</comment>
<comment type="sequence caution" evidence="2">
    <conflict type="erroneous initiation">
        <sequence resource="EMBL-CDS" id="AAO29230"/>
    </conflict>
</comment>
<accession>Q87BR5</accession>
<name>NAGZ_XYLFT</name>
<reference key="1">
    <citation type="journal article" date="2003" name="J. Bacteriol.">
        <title>Comparative analyses of the complete genome sequences of Pierce's disease and citrus variegated chlorosis strains of Xylella fastidiosa.</title>
        <authorList>
            <person name="Van Sluys M.A."/>
            <person name="de Oliveira M.C."/>
            <person name="Monteiro-Vitorello C.B."/>
            <person name="Miyaki C.Y."/>
            <person name="Furlan L.R."/>
            <person name="Camargo L.E.A."/>
            <person name="da Silva A.C.R."/>
            <person name="Moon D.H."/>
            <person name="Takita M.A."/>
            <person name="Lemos E.G.M."/>
            <person name="Machado M.A."/>
            <person name="Ferro M.I.T."/>
            <person name="da Silva F.R."/>
            <person name="Goldman M.H.S."/>
            <person name="Goldman G.H."/>
            <person name="Lemos M.V.F."/>
            <person name="El-Dorry H."/>
            <person name="Tsai S.M."/>
            <person name="Carrer H."/>
            <person name="Carraro D.M."/>
            <person name="de Oliveira R.C."/>
            <person name="Nunes L.R."/>
            <person name="Siqueira W.J."/>
            <person name="Coutinho L.L."/>
            <person name="Kimura E.T."/>
            <person name="Ferro E.S."/>
            <person name="Harakava R."/>
            <person name="Kuramae E.E."/>
            <person name="Marino C.L."/>
            <person name="Giglioti E."/>
            <person name="Abreu I.L."/>
            <person name="Alves L.M.C."/>
            <person name="do Amaral A.M."/>
            <person name="Baia G.S."/>
            <person name="Blanco S.R."/>
            <person name="Brito M.S."/>
            <person name="Cannavan F.S."/>
            <person name="Celestino A.V."/>
            <person name="da Cunha A.F."/>
            <person name="Fenille R.C."/>
            <person name="Ferro J.A."/>
            <person name="Formighieri E.F."/>
            <person name="Kishi L.T."/>
            <person name="Leoni S.G."/>
            <person name="Oliveira A.R."/>
            <person name="Rosa V.E. Jr."/>
            <person name="Sassaki F.T."/>
            <person name="Sena J.A.D."/>
            <person name="de Souza A.A."/>
            <person name="Truffi D."/>
            <person name="Tsukumo F."/>
            <person name="Yanai G.M."/>
            <person name="Zaros L.G."/>
            <person name="Civerolo E.L."/>
            <person name="Simpson A.J.G."/>
            <person name="Almeida N.F. Jr."/>
            <person name="Setubal J.C."/>
            <person name="Kitajima J.P."/>
        </authorList>
    </citation>
    <scope>NUCLEOTIDE SEQUENCE [LARGE SCALE GENOMIC DNA]</scope>
    <source>
        <strain>Temecula1 / ATCC 700964</strain>
    </source>
</reference>